<organism>
    <name type="scientific">Saccharomyces cerevisiae (strain Lalvin EC1118 / Prise de mousse)</name>
    <name type="common">Baker's yeast</name>
    <dbReference type="NCBI Taxonomy" id="643680"/>
    <lineage>
        <taxon>Eukaryota</taxon>
        <taxon>Fungi</taxon>
        <taxon>Dikarya</taxon>
        <taxon>Ascomycota</taxon>
        <taxon>Saccharomycotina</taxon>
        <taxon>Saccharomycetes</taxon>
        <taxon>Saccharomycetales</taxon>
        <taxon>Saccharomycetaceae</taxon>
        <taxon>Saccharomyces</taxon>
    </lineage>
</organism>
<reference key="1">
    <citation type="journal article" date="2009" name="Proc. Natl. Acad. Sci. U.S.A.">
        <title>Eukaryote-to-eukaryote gene transfer events revealed by the genome sequence of the wine yeast Saccharomyces cerevisiae EC1118.</title>
        <authorList>
            <person name="Novo M."/>
            <person name="Bigey F."/>
            <person name="Beyne E."/>
            <person name="Galeote V."/>
            <person name="Gavory F."/>
            <person name="Mallet S."/>
            <person name="Cambon B."/>
            <person name="Legras J.-L."/>
            <person name="Wincker P."/>
            <person name="Casaregola S."/>
            <person name="Dequin S."/>
        </authorList>
    </citation>
    <scope>NUCLEOTIDE SEQUENCE [LARGE SCALE GENOMIC DNA]</scope>
    <source>
        <strain>Lalvin EC1118 / Prise de mousse</strain>
    </source>
</reference>
<protein>
    <recommendedName>
        <fullName>Oxidant-induced cell-cycle arrest protein 5</fullName>
    </recommendedName>
</protein>
<gene>
    <name type="primary">OCA5</name>
    <name type="ORF">EC1118_1H21_0243g</name>
</gene>
<sequence>MHDKKSPMANSHYLKNLKQQFRNKNLIETTIHLVKCNDHDSLAFLARTYGVPPQLRHVVWPILLKYHPMCISPNITSNTISWDPITNDFILNDPFLKSKAPTDKQDKSDDENILPYDIESIILHDLKKYFHSRSNPAGSSSNANTTNIATPTPVSSSDASTISSMEVLSPSLDYEFQIIETLKNAIVKFLLKWSKIFKYESGLAWIALGLAEWYPIYPYETMSPFNETHSFYEVEDYVVLSGRKHALLSTNNGNNGNSNSSSNNTNNNNTNITSGMHNLSINTNTSLHNSPYISHTLSYLYKEYPLPFELRSKLPTKPIFSFSALFERLALVILHCPDTILAHKQLKNDSNASSSSKANSNFNTNYFPIISGGDLSFQTQVFFKVFSSILPELYQPLTEESSLQPSSSRNSWIYWWLKCSGAKALQRQDRGRVWDLLLGWRPKPNMDTINFFLNYNDKKMDHLYHDTPQCDNEQYWMKDWIALYNNDPFWFPDLDSMALGSKKFPYDYSVFKELILRNRYGGTQSKAQKDNTVPSPGSDSNDKSELKLPFSSIDPHMQLIFIFIAILQFNEFKLLEFEEAEIPEFLNNVPLLTKFDDSSYRKLYENTESSITSLPSSPTTSTMASLQSSSNSSAHISNYHMLIEVGNDAKASHCFDDLLNMAGDIWRKWLWRELEESSL</sequence>
<name>OCA5_YEAS8</name>
<feature type="chain" id="PRO_0000408221" description="Oxidant-induced cell-cycle arrest protein 5">
    <location>
        <begin position="1"/>
        <end position="679"/>
    </location>
</feature>
<feature type="domain" description="Rab-GAP TBC">
    <location>
        <begin position="50"/>
        <end position="441"/>
    </location>
</feature>
<feature type="region of interest" description="Disordered" evidence="2">
    <location>
        <begin position="135"/>
        <end position="159"/>
    </location>
</feature>
<feature type="region of interest" description="Disordered" evidence="2">
    <location>
        <begin position="250"/>
        <end position="271"/>
    </location>
</feature>
<feature type="region of interest" description="Disordered" evidence="2">
    <location>
        <begin position="524"/>
        <end position="544"/>
    </location>
</feature>
<feature type="compositionally biased region" description="Low complexity" evidence="2">
    <location>
        <begin position="135"/>
        <end position="153"/>
    </location>
</feature>
<feature type="compositionally biased region" description="Polar residues" evidence="2">
    <location>
        <begin position="524"/>
        <end position="539"/>
    </location>
</feature>
<keyword id="KW-0963">Cytoplasm</keyword>
<dbReference type="EMBL" id="FN393072">
    <property type="protein sequence ID" value="CAY80251.1"/>
    <property type="molecule type" value="Genomic_DNA"/>
</dbReference>
<dbReference type="HOGENOM" id="CLU_028817_0_0_1"/>
<dbReference type="OrthoDB" id="41340at4893"/>
<dbReference type="Proteomes" id="UP000000286">
    <property type="component" value="Chromosome VIII, Scaffold EC1118_1H21"/>
</dbReference>
<dbReference type="GO" id="GO:0005737">
    <property type="term" value="C:cytoplasm"/>
    <property type="evidence" value="ECO:0007669"/>
    <property type="project" value="UniProtKB-SubCell"/>
</dbReference>
<dbReference type="Gene3D" id="1.10.472.80">
    <property type="entry name" value="Ypt/Rab-GAP domain of gyp1p, domain 3"/>
    <property type="match status" value="1"/>
</dbReference>
<dbReference type="InterPro" id="IPR000195">
    <property type="entry name" value="Rab-GAP-TBC_dom"/>
</dbReference>
<dbReference type="InterPro" id="IPR035969">
    <property type="entry name" value="Rab-GAP_TBC_sf"/>
</dbReference>
<dbReference type="SMART" id="SM00164">
    <property type="entry name" value="TBC"/>
    <property type="match status" value="1"/>
</dbReference>
<dbReference type="SUPFAM" id="SSF47923">
    <property type="entry name" value="Ypt/Rab-GAP domain of gyp1p"/>
    <property type="match status" value="1"/>
</dbReference>
<evidence type="ECO:0000250" key="1"/>
<evidence type="ECO:0000256" key="2">
    <source>
        <dbReference type="SAM" id="MobiDB-lite"/>
    </source>
</evidence>
<evidence type="ECO:0000305" key="3"/>
<accession>C8ZA35</accession>
<proteinExistence type="inferred from homology"/>
<comment type="function">
    <text evidence="1">Required for replication of brome mosaic virus (BMV), a positive-strand RNA virus.</text>
</comment>
<comment type="subcellular location">
    <subcellularLocation>
        <location evidence="1">Cytoplasm</location>
    </subcellularLocation>
</comment>
<comment type="similarity">
    <text evidence="3">Belongs to the OCA5 family.</text>
</comment>